<dbReference type="EC" id="2.2.1.7" evidence="1"/>
<dbReference type="EMBL" id="CP001078">
    <property type="protein sequence ID" value="ACD51684.1"/>
    <property type="molecule type" value="Genomic_DNA"/>
</dbReference>
<dbReference type="RefSeq" id="WP_012449996.1">
    <property type="nucleotide sequence ID" value="NC_010723.1"/>
</dbReference>
<dbReference type="SMR" id="B2V4R3"/>
<dbReference type="KEGG" id="cbt:CLH_2166"/>
<dbReference type="HOGENOM" id="CLU_009227_1_4_9"/>
<dbReference type="UniPathway" id="UPA00064">
    <property type="reaction ID" value="UER00091"/>
</dbReference>
<dbReference type="GO" id="GO:0005829">
    <property type="term" value="C:cytosol"/>
    <property type="evidence" value="ECO:0007669"/>
    <property type="project" value="TreeGrafter"/>
</dbReference>
<dbReference type="GO" id="GO:0008661">
    <property type="term" value="F:1-deoxy-D-xylulose-5-phosphate synthase activity"/>
    <property type="evidence" value="ECO:0007669"/>
    <property type="project" value="UniProtKB-UniRule"/>
</dbReference>
<dbReference type="GO" id="GO:0000287">
    <property type="term" value="F:magnesium ion binding"/>
    <property type="evidence" value="ECO:0007669"/>
    <property type="project" value="UniProtKB-UniRule"/>
</dbReference>
<dbReference type="GO" id="GO:0030976">
    <property type="term" value="F:thiamine pyrophosphate binding"/>
    <property type="evidence" value="ECO:0007669"/>
    <property type="project" value="UniProtKB-UniRule"/>
</dbReference>
<dbReference type="GO" id="GO:0052865">
    <property type="term" value="P:1-deoxy-D-xylulose 5-phosphate biosynthetic process"/>
    <property type="evidence" value="ECO:0007669"/>
    <property type="project" value="UniProtKB-UniPathway"/>
</dbReference>
<dbReference type="GO" id="GO:0019288">
    <property type="term" value="P:isopentenyl diphosphate biosynthetic process, methylerythritol 4-phosphate pathway"/>
    <property type="evidence" value="ECO:0007669"/>
    <property type="project" value="TreeGrafter"/>
</dbReference>
<dbReference type="GO" id="GO:0016114">
    <property type="term" value="P:terpenoid biosynthetic process"/>
    <property type="evidence" value="ECO:0007669"/>
    <property type="project" value="UniProtKB-UniRule"/>
</dbReference>
<dbReference type="GO" id="GO:0009228">
    <property type="term" value="P:thiamine biosynthetic process"/>
    <property type="evidence" value="ECO:0007669"/>
    <property type="project" value="UniProtKB-UniRule"/>
</dbReference>
<dbReference type="CDD" id="cd02007">
    <property type="entry name" value="TPP_DXS"/>
    <property type="match status" value="1"/>
</dbReference>
<dbReference type="CDD" id="cd07033">
    <property type="entry name" value="TPP_PYR_DXS_TK_like"/>
    <property type="match status" value="1"/>
</dbReference>
<dbReference type="FunFam" id="3.40.50.970:FF:000005">
    <property type="entry name" value="1-deoxy-D-xylulose-5-phosphate synthase"/>
    <property type="match status" value="1"/>
</dbReference>
<dbReference type="Gene3D" id="3.40.50.920">
    <property type="match status" value="1"/>
</dbReference>
<dbReference type="Gene3D" id="3.40.50.970">
    <property type="match status" value="2"/>
</dbReference>
<dbReference type="HAMAP" id="MF_00315">
    <property type="entry name" value="DXP_synth"/>
    <property type="match status" value="1"/>
</dbReference>
<dbReference type="InterPro" id="IPR005477">
    <property type="entry name" value="Dxylulose-5-P_synthase"/>
</dbReference>
<dbReference type="InterPro" id="IPR029061">
    <property type="entry name" value="THDP-binding"/>
</dbReference>
<dbReference type="InterPro" id="IPR009014">
    <property type="entry name" value="Transketo_C/PFOR_II"/>
</dbReference>
<dbReference type="InterPro" id="IPR005475">
    <property type="entry name" value="Transketolase-like_Pyr-bd"/>
</dbReference>
<dbReference type="InterPro" id="IPR033248">
    <property type="entry name" value="Transketolase_C"/>
</dbReference>
<dbReference type="InterPro" id="IPR049557">
    <property type="entry name" value="Transketolase_CS"/>
</dbReference>
<dbReference type="NCBIfam" id="TIGR00204">
    <property type="entry name" value="dxs"/>
    <property type="match status" value="1"/>
</dbReference>
<dbReference type="NCBIfam" id="NF003933">
    <property type="entry name" value="PRK05444.2-2"/>
    <property type="match status" value="1"/>
</dbReference>
<dbReference type="PANTHER" id="PTHR43322">
    <property type="entry name" value="1-D-DEOXYXYLULOSE 5-PHOSPHATE SYNTHASE-RELATED"/>
    <property type="match status" value="1"/>
</dbReference>
<dbReference type="PANTHER" id="PTHR43322:SF5">
    <property type="entry name" value="1-DEOXY-D-XYLULOSE-5-PHOSPHATE SYNTHASE, CHLOROPLASTIC"/>
    <property type="match status" value="1"/>
</dbReference>
<dbReference type="Pfam" id="PF13292">
    <property type="entry name" value="DXP_synthase_N"/>
    <property type="match status" value="1"/>
</dbReference>
<dbReference type="Pfam" id="PF02779">
    <property type="entry name" value="Transket_pyr"/>
    <property type="match status" value="1"/>
</dbReference>
<dbReference type="Pfam" id="PF02780">
    <property type="entry name" value="Transketolase_C"/>
    <property type="match status" value="1"/>
</dbReference>
<dbReference type="SMART" id="SM00861">
    <property type="entry name" value="Transket_pyr"/>
    <property type="match status" value="1"/>
</dbReference>
<dbReference type="SUPFAM" id="SSF52518">
    <property type="entry name" value="Thiamin diphosphate-binding fold (THDP-binding)"/>
    <property type="match status" value="2"/>
</dbReference>
<dbReference type="SUPFAM" id="SSF52922">
    <property type="entry name" value="TK C-terminal domain-like"/>
    <property type="match status" value="1"/>
</dbReference>
<dbReference type="PROSITE" id="PS00801">
    <property type="entry name" value="TRANSKETOLASE_1"/>
    <property type="match status" value="1"/>
</dbReference>
<proteinExistence type="inferred from homology"/>
<reference key="1">
    <citation type="submission" date="2008-05" db="EMBL/GenBank/DDBJ databases">
        <title>Complete genome sequence of Clostridium botulinum E3 str. Alaska E43.</title>
        <authorList>
            <person name="Brinkac L.M."/>
            <person name="Brown J.L."/>
            <person name="Bruce D."/>
            <person name="Detter C."/>
            <person name="Munk C."/>
            <person name="Smith L.A."/>
            <person name="Smith T.J."/>
            <person name="Sutton G."/>
            <person name="Brettin T.S."/>
        </authorList>
    </citation>
    <scope>NUCLEOTIDE SEQUENCE [LARGE SCALE GENOMIC DNA]</scope>
    <source>
        <strain>Alaska E43 / Type E3</strain>
    </source>
</reference>
<evidence type="ECO:0000255" key="1">
    <source>
        <dbReference type="HAMAP-Rule" id="MF_00315"/>
    </source>
</evidence>
<evidence type="ECO:0000256" key="2">
    <source>
        <dbReference type="SAM" id="MobiDB-lite"/>
    </source>
</evidence>
<accession>B2V4R3</accession>
<keyword id="KW-0414">Isoprene biosynthesis</keyword>
<keyword id="KW-0460">Magnesium</keyword>
<keyword id="KW-0479">Metal-binding</keyword>
<keyword id="KW-0784">Thiamine biosynthesis</keyword>
<keyword id="KW-0786">Thiamine pyrophosphate</keyword>
<keyword id="KW-0808">Transferase</keyword>
<organism>
    <name type="scientific">Clostridium botulinum (strain Alaska E43 / Type E3)</name>
    <dbReference type="NCBI Taxonomy" id="508767"/>
    <lineage>
        <taxon>Bacteria</taxon>
        <taxon>Bacillati</taxon>
        <taxon>Bacillota</taxon>
        <taxon>Clostridia</taxon>
        <taxon>Eubacteriales</taxon>
        <taxon>Clostridiaceae</taxon>
        <taxon>Clostridium</taxon>
    </lineage>
</organism>
<protein>
    <recommendedName>
        <fullName evidence="1">1-deoxy-D-xylulose-5-phosphate synthase</fullName>
        <ecNumber evidence="1">2.2.1.7</ecNumber>
    </recommendedName>
    <alternativeName>
        <fullName evidence="1">1-deoxyxylulose-5-phosphate synthase</fullName>
        <shortName evidence="1">DXP synthase</shortName>
        <shortName evidence="1">DXPS</shortName>
    </alternativeName>
</protein>
<sequence length="619" mass="68509">MKSLLDSLNFPKDLKNLSDSDTEILSKEIRQFLIESVSKTGGHLSSNLGVVELTLSLMKSFDFEKDKIVWDVGHQSYVYKILTGRKDGFKNLRQFNGLSGFPKRNESKYDYFDTGHSSTSISAGLGMARARDLKGEKYTVVSVIGDGALTGGMALEALNDVGFRKTKMVIILNDNQMSISVNVGGLSRYLNKLRMGETYNRLKTNINTSLGSSDLGKDLISKMSKVKDSIKQLVVPSMFFENMGVKYIGPIDGHDIKAMNEVFSKVKDIEGPVIIHTVTQKGRGYSLAEKSPSKYHGIPPSNDKKEEPNKACRDSYSKAFGNALIDIAKEEKEVVAITAAMPDGTGLKDFATTYPERFFDVGIAEQHAVTLAAGMAANGLKPVFAVYSTFLQRGFDQVIHDVCIQDLPVTFAIDRAGIVGDDGETHQGIMDVSYLSMMPNMTIVAPKCTEEIPSMLRWAIKKNSPVAIRYPRGKDIVCNLDALQEISYGKWEVVSEGKKICIIASGRMLQHALLAKEILKEKGIDPKIVNATFIKPIDKCLLENLKEDGYDILTIEDNIICGGLGISILEYLNYIDYNGNMKLLGYNDEFIPQGNVEILYRTYGLDPVSISNTILKFYN</sequence>
<feature type="chain" id="PRO_1000115732" description="1-deoxy-D-xylulose-5-phosphate synthase">
    <location>
        <begin position="1"/>
        <end position="619"/>
    </location>
</feature>
<feature type="region of interest" description="Disordered" evidence="2">
    <location>
        <begin position="289"/>
        <end position="310"/>
    </location>
</feature>
<feature type="binding site" evidence="1">
    <location>
        <position position="74"/>
    </location>
    <ligand>
        <name>thiamine diphosphate</name>
        <dbReference type="ChEBI" id="CHEBI:58937"/>
    </ligand>
</feature>
<feature type="binding site" evidence="1">
    <location>
        <begin position="115"/>
        <end position="117"/>
    </location>
    <ligand>
        <name>thiamine diphosphate</name>
        <dbReference type="ChEBI" id="CHEBI:58937"/>
    </ligand>
</feature>
<feature type="binding site" evidence="1">
    <location>
        <position position="146"/>
    </location>
    <ligand>
        <name>Mg(2+)</name>
        <dbReference type="ChEBI" id="CHEBI:18420"/>
    </ligand>
</feature>
<feature type="binding site" evidence="1">
    <location>
        <begin position="147"/>
        <end position="148"/>
    </location>
    <ligand>
        <name>thiamine diphosphate</name>
        <dbReference type="ChEBI" id="CHEBI:58937"/>
    </ligand>
</feature>
<feature type="binding site" evidence="1">
    <location>
        <position position="175"/>
    </location>
    <ligand>
        <name>Mg(2+)</name>
        <dbReference type="ChEBI" id="CHEBI:18420"/>
    </ligand>
</feature>
<feature type="binding site" evidence="1">
    <location>
        <position position="175"/>
    </location>
    <ligand>
        <name>thiamine diphosphate</name>
        <dbReference type="ChEBI" id="CHEBI:58937"/>
    </ligand>
</feature>
<feature type="binding site" evidence="1">
    <location>
        <position position="285"/>
    </location>
    <ligand>
        <name>thiamine diphosphate</name>
        <dbReference type="ChEBI" id="CHEBI:58937"/>
    </ligand>
</feature>
<feature type="binding site" evidence="1">
    <location>
        <position position="365"/>
    </location>
    <ligand>
        <name>thiamine diphosphate</name>
        <dbReference type="ChEBI" id="CHEBI:58937"/>
    </ligand>
</feature>
<gene>
    <name evidence="1" type="primary">dxs</name>
    <name type="ordered locus">CLH_2166</name>
</gene>
<name>DXS_CLOBA</name>
<comment type="function">
    <text evidence="1">Catalyzes the acyloin condensation reaction between C atoms 2 and 3 of pyruvate and glyceraldehyde 3-phosphate to yield 1-deoxy-D-xylulose-5-phosphate (DXP).</text>
</comment>
<comment type="catalytic activity">
    <reaction evidence="1">
        <text>D-glyceraldehyde 3-phosphate + pyruvate + H(+) = 1-deoxy-D-xylulose 5-phosphate + CO2</text>
        <dbReference type="Rhea" id="RHEA:12605"/>
        <dbReference type="ChEBI" id="CHEBI:15361"/>
        <dbReference type="ChEBI" id="CHEBI:15378"/>
        <dbReference type="ChEBI" id="CHEBI:16526"/>
        <dbReference type="ChEBI" id="CHEBI:57792"/>
        <dbReference type="ChEBI" id="CHEBI:59776"/>
        <dbReference type="EC" id="2.2.1.7"/>
    </reaction>
</comment>
<comment type="cofactor">
    <cofactor evidence="1">
        <name>Mg(2+)</name>
        <dbReference type="ChEBI" id="CHEBI:18420"/>
    </cofactor>
    <text evidence="1">Binds 1 Mg(2+) ion per subunit.</text>
</comment>
<comment type="cofactor">
    <cofactor evidence="1">
        <name>thiamine diphosphate</name>
        <dbReference type="ChEBI" id="CHEBI:58937"/>
    </cofactor>
    <text evidence="1">Binds 1 thiamine pyrophosphate per subunit.</text>
</comment>
<comment type="pathway">
    <text evidence="1">Metabolic intermediate biosynthesis; 1-deoxy-D-xylulose 5-phosphate biosynthesis; 1-deoxy-D-xylulose 5-phosphate from D-glyceraldehyde 3-phosphate and pyruvate: step 1/1.</text>
</comment>
<comment type="subunit">
    <text evidence="1">Homodimer.</text>
</comment>
<comment type="similarity">
    <text evidence="1">Belongs to the transketolase family. DXPS subfamily.</text>
</comment>